<name>YITL_BACSU</name>
<evidence type="ECO:0000255" key="1">
    <source>
        <dbReference type="PROSITE-ProRule" id="PRU00180"/>
    </source>
</evidence>
<evidence type="ECO:0000256" key="2">
    <source>
        <dbReference type="SAM" id="MobiDB-lite"/>
    </source>
</evidence>
<evidence type="ECO:0000305" key="3"/>
<sequence length="298" mass="34054">MLTKSAENKRNRKDDSMRPGQQLTLSIDHQTDFGYFLTDGEDTILLHNSEMTEDIEDRDEVEVFIYVDQQERLAATMKIPIISADEYGWVEVVDKVEDMGVFVDVGLSKDALVATEHLPPYEDVWPQKGDKLYCMLKVTNRGRMFAKPAPEDIISELFTDASEDLMNKELTGTVYRLIASGSFVITDDGIRCFIHPSERKEEPRLGSRVTGRVIQVKEDGSVNLSLLPRKQDAMSVDAECILTYMRMRNGAMPYSDKSQPDDIRERFNMSKAAFKRALGHLMKNGKVYQENGWTYEKK</sequence>
<accession>O06747</accession>
<accession>Q799V4</accession>
<feature type="chain" id="PRO_0000388343" description="Uncharacterized protein YitL">
    <location>
        <begin position="1"/>
        <end position="298"/>
    </location>
</feature>
<feature type="domain" description="S1 motif" evidence="1">
    <location>
        <begin position="167"/>
        <end position="227"/>
    </location>
</feature>
<feature type="region of interest" description="Disordered" evidence="2">
    <location>
        <begin position="1"/>
        <end position="22"/>
    </location>
</feature>
<feature type="compositionally biased region" description="Basic and acidic residues" evidence="2">
    <location>
        <begin position="1"/>
        <end position="17"/>
    </location>
</feature>
<gene>
    <name type="primary">yitL</name>
    <name type="ordered locus">BSU11030</name>
</gene>
<reference key="1">
    <citation type="journal article" date="1997" name="Microbiology">
        <title>A Bacillus subtilis chromosome segment at the 100 degrees to 102 degrees position encoding 11 membrane proteins.</title>
        <authorList>
            <person name="Roche B."/>
            <person name="Autret S."/>
            <person name="Levine A."/>
            <person name="Vannier F."/>
            <person name="Medina N."/>
            <person name="Seror S.J."/>
        </authorList>
    </citation>
    <scope>NUCLEOTIDE SEQUENCE [GENOMIC DNA]</scope>
</reference>
<reference key="2">
    <citation type="journal article" date="1997" name="Nature">
        <title>The complete genome sequence of the Gram-positive bacterium Bacillus subtilis.</title>
        <authorList>
            <person name="Kunst F."/>
            <person name="Ogasawara N."/>
            <person name="Moszer I."/>
            <person name="Albertini A.M."/>
            <person name="Alloni G."/>
            <person name="Azevedo V."/>
            <person name="Bertero M.G."/>
            <person name="Bessieres P."/>
            <person name="Bolotin A."/>
            <person name="Borchert S."/>
            <person name="Borriss R."/>
            <person name="Boursier L."/>
            <person name="Brans A."/>
            <person name="Braun M."/>
            <person name="Brignell S.C."/>
            <person name="Bron S."/>
            <person name="Brouillet S."/>
            <person name="Bruschi C.V."/>
            <person name="Caldwell B."/>
            <person name="Capuano V."/>
            <person name="Carter N.M."/>
            <person name="Choi S.-K."/>
            <person name="Codani J.-J."/>
            <person name="Connerton I.F."/>
            <person name="Cummings N.J."/>
            <person name="Daniel R.A."/>
            <person name="Denizot F."/>
            <person name="Devine K.M."/>
            <person name="Duesterhoeft A."/>
            <person name="Ehrlich S.D."/>
            <person name="Emmerson P.T."/>
            <person name="Entian K.-D."/>
            <person name="Errington J."/>
            <person name="Fabret C."/>
            <person name="Ferrari E."/>
            <person name="Foulger D."/>
            <person name="Fritz C."/>
            <person name="Fujita M."/>
            <person name="Fujita Y."/>
            <person name="Fuma S."/>
            <person name="Galizzi A."/>
            <person name="Galleron N."/>
            <person name="Ghim S.-Y."/>
            <person name="Glaser P."/>
            <person name="Goffeau A."/>
            <person name="Golightly E.J."/>
            <person name="Grandi G."/>
            <person name="Guiseppi G."/>
            <person name="Guy B.J."/>
            <person name="Haga K."/>
            <person name="Haiech J."/>
            <person name="Harwood C.R."/>
            <person name="Henaut A."/>
            <person name="Hilbert H."/>
            <person name="Holsappel S."/>
            <person name="Hosono S."/>
            <person name="Hullo M.-F."/>
            <person name="Itaya M."/>
            <person name="Jones L.-M."/>
            <person name="Joris B."/>
            <person name="Karamata D."/>
            <person name="Kasahara Y."/>
            <person name="Klaerr-Blanchard M."/>
            <person name="Klein C."/>
            <person name="Kobayashi Y."/>
            <person name="Koetter P."/>
            <person name="Koningstein G."/>
            <person name="Krogh S."/>
            <person name="Kumano M."/>
            <person name="Kurita K."/>
            <person name="Lapidus A."/>
            <person name="Lardinois S."/>
            <person name="Lauber J."/>
            <person name="Lazarevic V."/>
            <person name="Lee S.-M."/>
            <person name="Levine A."/>
            <person name="Liu H."/>
            <person name="Masuda S."/>
            <person name="Mauel C."/>
            <person name="Medigue C."/>
            <person name="Medina N."/>
            <person name="Mellado R.P."/>
            <person name="Mizuno M."/>
            <person name="Moestl D."/>
            <person name="Nakai S."/>
            <person name="Noback M."/>
            <person name="Noone D."/>
            <person name="O'Reilly M."/>
            <person name="Ogawa K."/>
            <person name="Ogiwara A."/>
            <person name="Oudega B."/>
            <person name="Park S.-H."/>
            <person name="Parro V."/>
            <person name="Pohl T.M."/>
            <person name="Portetelle D."/>
            <person name="Porwollik S."/>
            <person name="Prescott A.M."/>
            <person name="Presecan E."/>
            <person name="Pujic P."/>
            <person name="Purnelle B."/>
            <person name="Rapoport G."/>
            <person name="Rey M."/>
            <person name="Reynolds S."/>
            <person name="Rieger M."/>
            <person name="Rivolta C."/>
            <person name="Rocha E."/>
            <person name="Roche B."/>
            <person name="Rose M."/>
            <person name="Sadaie Y."/>
            <person name="Sato T."/>
            <person name="Scanlan E."/>
            <person name="Schleich S."/>
            <person name="Schroeter R."/>
            <person name="Scoffone F."/>
            <person name="Sekiguchi J."/>
            <person name="Sekowska A."/>
            <person name="Seror S.J."/>
            <person name="Serror P."/>
            <person name="Shin B.-S."/>
            <person name="Soldo B."/>
            <person name="Sorokin A."/>
            <person name="Tacconi E."/>
            <person name="Takagi T."/>
            <person name="Takahashi H."/>
            <person name="Takemaru K."/>
            <person name="Takeuchi M."/>
            <person name="Tamakoshi A."/>
            <person name="Tanaka T."/>
            <person name="Terpstra P."/>
            <person name="Tognoni A."/>
            <person name="Tosato V."/>
            <person name="Uchiyama S."/>
            <person name="Vandenbol M."/>
            <person name="Vannier F."/>
            <person name="Vassarotti A."/>
            <person name="Viari A."/>
            <person name="Wambutt R."/>
            <person name="Wedler E."/>
            <person name="Wedler H."/>
            <person name="Weitzenegger T."/>
            <person name="Winters P."/>
            <person name="Wipat A."/>
            <person name="Yamamoto H."/>
            <person name="Yamane K."/>
            <person name="Yasumoto K."/>
            <person name="Yata K."/>
            <person name="Yoshida K."/>
            <person name="Yoshikawa H.-F."/>
            <person name="Zumstein E."/>
            <person name="Yoshikawa H."/>
            <person name="Danchin A."/>
        </authorList>
    </citation>
    <scope>NUCLEOTIDE SEQUENCE [LARGE SCALE GENOMIC DNA]</scope>
    <source>
        <strain>168</strain>
    </source>
</reference>
<protein>
    <recommendedName>
        <fullName>Uncharacterized protein YitL</fullName>
    </recommendedName>
</protein>
<comment type="sequence caution" evidence="3">
    <conflict type="erroneous initiation">
        <sequence resource="EMBL-CDS" id="CAA70667"/>
    </conflict>
</comment>
<keyword id="KW-1185">Reference proteome</keyword>
<dbReference type="EMBL" id="Y09476">
    <property type="protein sequence ID" value="CAA70667.1"/>
    <property type="status" value="ALT_INIT"/>
    <property type="molecule type" value="Genomic_DNA"/>
</dbReference>
<dbReference type="EMBL" id="AL009126">
    <property type="protein sequence ID" value="CAB12943.1"/>
    <property type="molecule type" value="Genomic_DNA"/>
</dbReference>
<dbReference type="PIR" id="E69840">
    <property type="entry name" value="E69840"/>
</dbReference>
<dbReference type="RefSeq" id="NP_388984.1">
    <property type="nucleotide sequence ID" value="NC_000964.3"/>
</dbReference>
<dbReference type="RefSeq" id="WP_010886474.1">
    <property type="nucleotide sequence ID" value="NZ_OZ025638.1"/>
</dbReference>
<dbReference type="SMR" id="O06747"/>
<dbReference type="FunCoup" id="O06747">
    <property type="interactions" value="78"/>
</dbReference>
<dbReference type="STRING" id="224308.BSU11030"/>
<dbReference type="jPOST" id="O06747"/>
<dbReference type="PaxDb" id="224308-BSU11030"/>
<dbReference type="EnsemblBacteria" id="CAB12943">
    <property type="protein sequence ID" value="CAB12943"/>
    <property type="gene ID" value="BSU_11030"/>
</dbReference>
<dbReference type="GeneID" id="939792"/>
<dbReference type="KEGG" id="bsu:BSU11030"/>
<dbReference type="PATRIC" id="fig|224308.43.peg.1150"/>
<dbReference type="eggNOG" id="COG2996">
    <property type="taxonomic scope" value="Bacteria"/>
</dbReference>
<dbReference type="InParanoid" id="O06747"/>
<dbReference type="OrthoDB" id="9801597at2"/>
<dbReference type="PhylomeDB" id="O06747"/>
<dbReference type="BioCyc" id="BSUB:BSU11030-MONOMER"/>
<dbReference type="Proteomes" id="UP000001570">
    <property type="component" value="Chromosome"/>
</dbReference>
<dbReference type="GO" id="GO:0003676">
    <property type="term" value="F:nucleic acid binding"/>
    <property type="evidence" value="ECO:0007669"/>
    <property type="project" value="InterPro"/>
</dbReference>
<dbReference type="CDD" id="cd00164">
    <property type="entry name" value="S1_like"/>
    <property type="match status" value="1"/>
</dbReference>
<dbReference type="Gene3D" id="2.40.50.140">
    <property type="entry name" value="Nucleic acid-binding proteins"/>
    <property type="match status" value="2"/>
</dbReference>
<dbReference type="Gene3D" id="1.10.10.10">
    <property type="entry name" value="Winged helix-like DNA-binding domain superfamily/Winged helix DNA-binding domain"/>
    <property type="match status" value="1"/>
</dbReference>
<dbReference type="InterPro" id="IPR014464">
    <property type="entry name" value="CvfB_fam"/>
</dbReference>
<dbReference type="InterPro" id="IPR048588">
    <property type="entry name" value="CvfB_S1_2nd"/>
</dbReference>
<dbReference type="InterPro" id="IPR048587">
    <property type="entry name" value="CvfB_S1_3rd"/>
</dbReference>
<dbReference type="InterPro" id="IPR039566">
    <property type="entry name" value="CvfB_S1_st"/>
</dbReference>
<dbReference type="InterPro" id="IPR040764">
    <property type="entry name" value="CvfB_WH"/>
</dbReference>
<dbReference type="InterPro" id="IPR012340">
    <property type="entry name" value="NA-bd_OB-fold"/>
</dbReference>
<dbReference type="InterPro" id="IPR003029">
    <property type="entry name" value="S1_domain"/>
</dbReference>
<dbReference type="InterPro" id="IPR036388">
    <property type="entry name" value="WH-like_DNA-bd_sf"/>
</dbReference>
<dbReference type="PANTHER" id="PTHR37296">
    <property type="entry name" value="CONSERVED VIRULENCE FACTOR B"/>
    <property type="match status" value="1"/>
</dbReference>
<dbReference type="PANTHER" id="PTHR37296:SF1">
    <property type="entry name" value="CONSERVED VIRULENCE FACTOR B"/>
    <property type="match status" value="1"/>
</dbReference>
<dbReference type="Pfam" id="PF21191">
    <property type="entry name" value="CvfB_1st"/>
    <property type="match status" value="1"/>
</dbReference>
<dbReference type="Pfam" id="PF21543">
    <property type="entry name" value="CvfB_2nd"/>
    <property type="match status" value="1"/>
</dbReference>
<dbReference type="Pfam" id="PF17783">
    <property type="entry name" value="CvfB_WH"/>
    <property type="match status" value="1"/>
</dbReference>
<dbReference type="Pfam" id="PF13509">
    <property type="entry name" value="S1_2"/>
    <property type="match status" value="1"/>
</dbReference>
<dbReference type="PIRSF" id="PIRSF012524">
    <property type="entry name" value="YitL_S1"/>
    <property type="match status" value="1"/>
</dbReference>
<dbReference type="SMART" id="SM00316">
    <property type="entry name" value="S1"/>
    <property type="match status" value="3"/>
</dbReference>
<dbReference type="SUPFAM" id="SSF50249">
    <property type="entry name" value="Nucleic acid-binding proteins"/>
    <property type="match status" value="1"/>
</dbReference>
<dbReference type="PROSITE" id="PS50126">
    <property type="entry name" value="S1"/>
    <property type="match status" value="1"/>
</dbReference>
<proteinExistence type="predicted"/>
<organism>
    <name type="scientific">Bacillus subtilis (strain 168)</name>
    <dbReference type="NCBI Taxonomy" id="224308"/>
    <lineage>
        <taxon>Bacteria</taxon>
        <taxon>Bacillati</taxon>
        <taxon>Bacillota</taxon>
        <taxon>Bacilli</taxon>
        <taxon>Bacillales</taxon>
        <taxon>Bacillaceae</taxon>
        <taxon>Bacillus</taxon>
    </lineage>
</organism>